<gene>
    <name type="ORF">NFIA_054990</name>
</gene>
<sequence>MKSFNLLSLSLLLAIASAAAVPDVEGTITNDAATPVNNLDDKRDHCGQVCLNKTGCGGKCPKCDMRSLTCKKA</sequence>
<reference key="1">
    <citation type="journal article" date="2008" name="PLoS Genet.">
        <title>Genomic islands in the pathogenic filamentous fungus Aspergillus fumigatus.</title>
        <authorList>
            <person name="Fedorova N.D."/>
            <person name="Khaldi N."/>
            <person name="Joardar V.S."/>
            <person name="Maiti R."/>
            <person name="Amedeo P."/>
            <person name="Anderson M.J."/>
            <person name="Crabtree J."/>
            <person name="Silva J.C."/>
            <person name="Badger J.H."/>
            <person name="Albarraq A."/>
            <person name="Angiuoli S."/>
            <person name="Bussey H."/>
            <person name="Bowyer P."/>
            <person name="Cotty P.J."/>
            <person name="Dyer P.S."/>
            <person name="Egan A."/>
            <person name="Galens K."/>
            <person name="Fraser-Liggett C.M."/>
            <person name="Haas B.J."/>
            <person name="Inman J.M."/>
            <person name="Kent R."/>
            <person name="Lemieux S."/>
            <person name="Malavazi I."/>
            <person name="Orvis J."/>
            <person name="Roemer T."/>
            <person name="Ronning C.M."/>
            <person name="Sundaram J.P."/>
            <person name="Sutton G."/>
            <person name="Turner G."/>
            <person name="Venter J.C."/>
            <person name="White O.R."/>
            <person name="Whitty B.R."/>
            <person name="Youngman P."/>
            <person name="Wolfe K.H."/>
            <person name="Goldman G.H."/>
            <person name="Wortman J.R."/>
            <person name="Jiang B."/>
            <person name="Denning D.W."/>
            <person name="Nierman W.C."/>
        </authorList>
    </citation>
    <scope>NUCLEOTIDE SEQUENCE [LARGE SCALE GENOMIC DNA]</scope>
    <source>
        <strain>ATCC 1020 / DSM 3700 / CBS 544.65 / FGSC A1164 / JCM 1740 / NRRL 181 / WB 181</strain>
    </source>
</reference>
<keyword id="KW-1015">Disulfide bond</keyword>
<keyword id="KW-0960">Knottin</keyword>
<keyword id="KW-1185">Reference proteome</keyword>
<keyword id="KW-0964">Secreted</keyword>
<keyword id="KW-0732">Signal</keyword>
<proteinExistence type="inferred from homology"/>
<accession>A1DMY0</accession>
<comment type="subcellular location">
    <subcellularLocation>
        <location evidence="2">Secreted</location>
    </subcellularLocation>
</comment>
<comment type="domain">
    <text evidence="2">The presence of a 'disulfide through disulfide knot' structurally defines this protein as a knottin.</text>
</comment>
<comment type="similarity">
    <text evidence="2">Belongs to the UPF0499 family.</text>
</comment>
<feature type="signal peptide" evidence="1">
    <location>
        <begin position="1"/>
        <end position="20"/>
    </location>
</feature>
<feature type="chain" id="PRO_0000307903" description="UPF0499 protein NFIA_054990">
    <location>
        <begin position="21"/>
        <end position="73"/>
    </location>
</feature>
<feature type="disulfide bond" evidence="2">
    <location>
        <begin position="46"/>
        <end position="60"/>
    </location>
</feature>
<feature type="disulfide bond" evidence="2">
    <location>
        <begin position="50"/>
        <end position="63"/>
    </location>
</feature>
<feature type="disulfide bond" evidence="2">
    <location>
        <begin position="56"/>
        <end position="70"/>
    </location>
</feature>
<dbReference type="EMBL" id="DS027698">
    <property type="protein sequence ID" value="EAW16151.1"/>
    <property type="molecule type" value="Genomic_DNA"/>
</dbReference>
<dbReference type="RefSeq" id="XP_001258048.1">
    <property type="nucleotide sequence ID" value="XM_001258047.1"/>
</dbReference>
<dbReference type="SMR" id="A1DMY0"/>
<dbReference type="EnsemblFungi" id="EAW16151">
    <property type="protein sequence ID" value="EAW16151"/>
    <property type="gene ID" value="NFIA_054990"/>
</dbReference>
<dbReference type="GeneID" id="4584563"/>
<dbReference type="KEGG" id="nfi:NFIA_054990"/>
<dbReference type="VEuPathDB" id="FungiDB:NFIA_054990"/>
<dbReference type="eggNOG" id="ENOG502RPNC">
    <property type="taxonomic scope" value="Eukaryota"/>
</dbReference>
<dbReference type="HOGENOM" id="CLU_2739561_0_0_1"/>
<dbReference type="OMA" id="DDKRDHC"/>
<dbReference type="OrthoDB" id="4489613at2759"/>
<dbReference type="Proteomes" id="UP000006702">
    <property type="component" value="Unassembled WGS sequence"/>
</dbReference>
<dbReference type="GO" id="GO:0005576">
    <property type="term" value="C:extracellular region"/>
    <property type="evidence" value="ECO:0007669"/>
    <property type="project" value="UniProtKB-SubCell"/>
</dbReference>
<protein>
    <recommendedName>
        <fullName>UPF0499 protein NFIA_054990</fullName>
    </recommendedName>
</protein>
<name>U499_NEOFI</name>
<evidence type="ECO:0000255" key="1"/>
<evidence type="ECO:0000305" key="2"/>
<organism>
    <name type="scientific">Neosartorya fischeri (strain ATCC 1020 / DSM 3700 / CBS 544.65 / FGSC A1164 / JCM 1740 / NRRL 181 / WB 181)</name>
    <name type="common">Aspergillus fischerianus</name>
    <dbReference type="NCBI Taxonomy" id="331117"/>
    <lineage>
        <taxon>Eukaryota</taxon>
        <taxon>Fungi</taxon>
        <taxon>Dikarya</taxon>
        <taxon>Ascomycota</taxon>
        <taxon>Pezizomycotina</taxon>
        <taxon>Eurotiomycetes</taxon>
        <taxon>Eurotiomycetidae</taxon>
        <taxon>Eurotiales</taxon>
        <taxon>Aspergillaceae</taxon>
        <taxon>Aspergillus</taxon>
        <taxon>Aspergillus subgen. Fumigati</taxon>
    </lineage>
</organism>